<feature type="chain" id="PRO_1000009574" description="tRNA-specific 2-thiouridylase MnmA">
    <location>
        <begin position="1"/>
        <end position="372"/>
    </location>
</feature>
<feature type="region of interest" description="Interaction with target base in tRNA" evidence="1">
    <location>
        <begin position="102"/>
        <end position="104"/>
    </location>
</feature>
<feature type="region of interest" description="Interaction with tRNA" evidence="1">
    <location>
        <begin position="155"/>
        <end position="157"/>
    </location>
</feature>
<feature type="region of interest" description="Interaction with tRNA" evidence="1">
    <location>
        <begin position="317"/>
        <end position="318"/>
    </location>
</feature>
<feature type="active site" description="Nucleophile" evidence="1">
    <location>
        <position position="107"/>
    </location>
</feature>
<feature type="active site" description="Cysteine persulfide intermediate" evidence="1">
    <location>
        <position position="205"/>
    </location>
</feature>
<feature type="binding site" evidence="1">
    <location>
        <begin position="16"/>
        <end position="23"/>
    </location>
    <ligand>
        <name>ATP</name>
        <dbReference type="ChEBI" id="CHEBI:30616"/>
    </ligand>
</feature>
<feature type="binding site" evidence="1">
    <location>
        <position position="42"/>
    </location>
    <ligand>
        <name>ATP</name>
        <dbReference type="ChEBI" id="CHEBI:30616"/>
    </ligand>
</feature>
<feature type="binding site" evidence="1">
    <location>
        <position position="132"/>
    </location>
    <ligand>
        <name>ATP</name>
        <dbReference type="ChEBI" id="CHEBI:30616"/>
    </ligand>
</feature>
<feature type="site" description="Interaction with tRNA" evidence="1">
    <location>
        <position position="133"/>
    </location>
</feature>
<feature type="site" description="Interaction with tRNA" evidence="1">
    <location>
        <position position="350"/>
    </location>
</feature>
<feature type="disulfide bond" description="Alternate" evidence="1">
    <location>
        <begin position="107"/>
        <end position="205"/>
    </location>
</feature>
<keyword id="KW-0067">ATP-binding</keyword>
<keyword id="KW-0963">Cytoplasm</keyword>
<keyword id="KW-1015">Disulfide bond</keyword>
<keyword id="KW-0547">Nucleotide-binding</keyword>
<keyword id="KW-0694">RNA-binding</keyword>
<keyword id="KW-0808">Transferase</keyword>
<keyword id="KW-0819">tRNA processing</keyword>
<keyword id="KW-0820">tRNA-binding</keyword>
<gene>
    <name evidence="1" type="primary">mnmA</name>
    <name type="synonym">trmU</name>
    <name type="ordered locus">Shewmr4_1603</name>
</gene>
<dbReference type="EC" id="2.8.1.13" evidence="1"/>
<dbReference type="EMBL" id="CP000446">
    <property type="protein sequence ID" value="ABI38680.1"/>
    <property type="molecule type" value="Genomic_DNA"/>
</dbReference>
<dbReference type="RefSeq" id="WP_011622383.1">
    <property type="nucleotide sequence ID" value="NC_008321.1"/>
</dbReference>
<dbReference type="SMR" id="Q0HJT7"/>
<dbReference type="KEGG" id="she:Shewmr4_1603"/>
<dbReference type="HOGENOM" id="CLU_035188_1_0_6"/>
<dbReference type="GO" id="GO:0005737">
    <property type="term" value="C:cytoplasm"/>
    <property type="evidence" value="ECO:0007669"/>
    <property type="project" value="UniProtKB-SubCell"/>
</dbReference>
<dbReference type="GO" id="GO:0005524">
    <property type="term" value="F:ATP binding"/>
    <property type="evidence" value="ECO:0007669"/>
    <property type="project" value="UniProtKB-KW"/>
</dbReference>
<dbReference type="GO" id="GO:0000049">
    <property type="term" value="F:tRNA binding"/>
    <property type="evidence" value="ECO:0007669"/>
    <property type="project" value="UniProtKB-KW"/>
</dbReference>
<dbReference type="GO" id="GO:0103016">
    <property type="term" value="F:tRNA-uridine 2-sulfurtransferase activity"/>
    <property type="evidence" value="ECO:0007669"/>
    <property type="project" value="UniProtKB-EC"/>
</dbReference>
<dbReference type="GO" id="GO:0002143">
    <property type="term" value="P:tRNA wobble position uridine thiolation"/>
    <property type="evidence" value="ECO:0007669"/>
    <property type="project" value="TreeGrafter"/>
</dbReference>
<dbReference type="CDD" id="cd01998">
    <property type="entry name" value="MnmA_TRMU-like"/>
    <property type="match status" value="1"/>
</dbReference>
<dbReference type="FunFam" id="2.30.30.280:FF:000001">
    <property type="entry name" value="tRNA-specific 2-thiouridylase MnmA"/>
    <property type="match status" value="1"/>
</dbReference>
<dbReference type="FunFam" id="2.40.30.10:FF:000023">
    <property type="entry name" value="tRNA-specific 2-thiouridylase MnmA"/>
    <property type="match status" value="1"/>
</dbReference>
<dbReference type="FunFam" id="3.40.50.620:FF:000004">
    <property type="entry name" value="tRNA-specific 2-thiouridylase MnmA"/>
    <property type="match status" value="1"/>
</dbReference>
<dbReference type="Gene3D" id="2.30.30.280">
    <property type="entry name" value="Adenine nucleotide alpha hydrolases-like domains"/>
    <property type="match status" value="1"/>
</dbReference>
<dbReference type="Gene3D" id="3.40.50.620">
    <property type="entry name" value="HUPs"/>
    <property type="match status" value="1"/>
</dbReference>
<dbReference type="Gene3D" id="2.40.30.10">
    <property type="entry name" value="Translation factors"/>
    <property type="match status" value="1"/>
</dbReference>
<dbReference type="HAMAP" id="MF_00144">
    <property type="entry name" value="tRNA_thiouridyl_MnmA"/>
    <property type="match status" value="1"/>
</dbReference>
<dbReference type="InterPro" id="IPR004506">
    <property type="entry name" value="MnmA-like"/>
</dbReference>
<dbReference type="InterPro" id="IPR046885">
    <property type="entry name" value="MnmA-like_C"/>
</dbReference>
<dbReference type="InterPro" id="IPR046884">
    <property type="entry name" value="MnmA-like_central"/>
</dbReference>
<dbReference type="InterPro" id="IPR023382">
    <property type="entry name" value="MnmA-like_central_sf"/>
</dbReference>
<dbReference type="InterPro" id="IPR014729">
    <property type="entry name" value="Rossmann-like_a/b/a_fold"/>
</dbReference>
<dbReference type="NCBIfam" id="NF001138">
    <property type="entry name" value="PRK00143.1"/>
    <property type="match status" value="1"/>
</dbReference>
<dbReference type="NCBIfam" id="TIGR00420">
    <property type="entry name" value="trmU"/>
    <property type="match status" value="1"/>
</dbReference>
<dbReference type="PANTHER" id="PTHR11933:SF5">
    <property type="entry name" value="MITOCHONDRIAL TRNA-SPECIFIC 2-THIOURIDYLASE 1"/>
    <property type="match status" value="1"/>
</dbReference>
<dbReference type="PANTHER" id="PTHR11933">
    <property type="entry name" value="TRNA 5-METHYLAMINOMETHYL-2-THIOURIDYLATE -METHYLTRANSFERASE"/>
    <property type="match status" value="1"/>
</dbReference>
<dbReference type="Pfam" id="PF03054">
    <property type="entry name" value="tRNA_Me_trans"/>
    <property type="match status" value="1"/>
</dbReference>
<dbReference type="Pfam" id="PF20258">
    <property type="entry name" value="tRNA_Me_trans_C"/>
    <property type="match status" value="1"/>
</dbReference>
<dbReference type="Pfam" id="PF20259">
    <property type="entry name" value="tRNA_Me_trans_M"/>
    <property type="match status" value="1"/>
</dbReference>
<dbReference type="SUPFAM" id="SSF52402">
    <property type="entry name" value="Adenine nucleotide alpha hydrolases-like"/>
    <property type="match status" value="1"/>
</dbReference>
<evidence type="ECO:0000255" key="1">
    <source>
        <dbReference type="HAMAP-Rule" id="MF_00144"/>
    </source>
</evidence>
<reference key="1">
    <citation type="submission" date="2006-08" db="EMBL/GenBank/DDBJ databases">
        <title>Complete sequence of Shewanella sp. MR-4.</title>
        <authorList>
            <consortium name="US DOE Joint Genome Institute"/>
            <person name="Copeland A."/>
            <person name="Lucas S."/>
            <person name="Lapidus A."/>
            <person name="Barry K."/>
            <person name="Detter J.C."/>
            <person name="Glavina del Rio T."/>
            <person name="Hammon N."/>
            <person name="Israni S."/>
            <person name="Dalin E."/>
            <person name="Tice H."/>
            <person name="Pitluck S."/>
            <person name="Kiss H."/>
            <person name="Brettin T."/>
            <person name="Bruce D."/>
            <person name="Han C."/>
            <person name="Tapia R."/>
            <person name="Gilna P."/>
            <person name="Schmutz J."/>
            <person name="Larimer F."/>
            <person name="Land M."/>
            <person name="Hauser L."/>
            <person name="Kyrpides N."/>
            <person name="Mikhailova N."/>
            <person name="Nealson K."/>
            <person name="Konstantinidis K."/>
            <person name="Klappenbach J."/>
            <person name="Tiedje J."/>
            <person name="Richardson P."/>
        </authorList>
    </citation>
    <scope>NUCLEOTIDE SEQUENCE [LARGE SCALE GENOMIC DNA]</scope>
    <source>
        <strain>MR-4</strain>
    </source>
</reference>
<sequence length="372" mass="41621">MTSIEPTHTGKKVIVGMSGGVDSSVSAYLLMQQGYQVEGLFMKNWEEDDNDEYCAAAEDLKDAQAVCDKLGIKLHTVNFAAEYWDNVFEYFLAEYKAGRTPNPDIMCNKEIKFKAFLDFADDILDADYIAMGHYVRRRDNADGTTQMLRGVDNNKDQSYFLYTLSHEQVARSLFPVGELEKHEVREIAKKMGLITHDKKDSTGICFIGERKFTEFLGNYLPAQPGNIETAEGEVIGKHQGLMYHTLGQRKGLGIGGMKNSNDDPWYVVDKDLKRNVLVVGQGGHHPRLMSNGMLVNQLHWVDRKGPAEGSQIVVKTRYRQQDIPCTLTYLDDNTLKVVFDEPVAAVTPGQSAVFYDGEVCLGGGIIDQLIRG</sequence>
<comment type="function">
    <text evidence="1">Catalyzes the 2-thiolation of uridine at the wobble position (U34) of tRNA, leading to the formation of s(2)U34.</text>
</comment>
<comment type="catalytic activity">
    <reaction evidence="1">
        <text>S-sulfanyl-L-cysteinyl-[protein] + uridine(34) in tRNA + AH2 + ATP = 2-thiouridine(34) in tRNA + L-cysteinyl-[protein] + A + AMP + diphosphate + H(+)</text>
        <dbReference type="Rhea" id="RHEA:47032"/>
        <dbReference type="Rhea" id="RHEA-COMP:10131"/>
        <dbReference type="Rhea" id="RHEA-COMP:11726"/>
        <dbReference type="Rhea" id="RHEA-COMP:11727"/>
        <dbReference type="Rhea" id="RHEA-COMP:11728"/>
        <dbReference type="ChEBI" id="CHEBI:13193"/>
        <dbReference type="ChEBI" id="CHEBI:15378"/>
        <dbReference type="ChEBI" id="CHEBI:17499"/>
        <dbReference type="ChEBI" id="CHEBI:29950"/>
        <dbReference type="ChEBI" id="CHEBI:30616"/>
        <dbReference type="ChEBI" id="CHEBI:33019"/>
        <dbReference type="ChEBI" id="CHEBI:61963"/>
        <dbReference type="ChEBI" id="CHEBI:65315"/>
        <dbReference type="ChEBI" id="CHEBI:87170"/>
        <dbReference type="ChEBI" id="CHEBI:456215"/>
        <dbReference type="EC" id="2.8.1.13"/>
    </reaction>
</comment>
<comment type="subcellular location">
    <subcellularLocation>
        <location evidence="1">Cytoplasm</location>
    </subcellularLocation>
</comment>
<comment type="similarity">
    <text evidence="1">Belongs to the MnmA/TRMU family.</text>
</comment>
<accession>Q0HJT7</accession>
<protein>
    <recommendedName>
        <fullName evidence="1">tRNA-specific 2-thiouridylase MnmA</fullName>
        <ecNumber evidence="1">2.8.1.13</ecNumber>
    </recommendedName>
</protein>
<organism>
    <name type="scientific">Shewanella sp. (strain MR-4)</name>
    <dbReference type="NCBI Taxonomy" id="60480"/>
    <lineage>
        <taxon>Bacteria</taxon>
        <taxon>Pseudomonadati</taxon>
        <taxon>Pseudomonadota</taxon>
        <taxon>Gammaproteobacteria</taxon>
        <taxon>Alteromonadales</taxon>
        <taxon>Shewanellaceae</taxon>
        <taxon>Shewanella</taxon>
    </lineage>
</organism>
<proteinExistence type="inferred from homology"/>
<name>MNMA_SHESM</name>